<protein>
    <recommendedName>
        <fullName evidence="5">1-carboxybiuret hydrolase subunit AtzE</fullName>
        <ecNumber evidence="3">3.5.1.131</ecNumber>
    </recommendedName>
</protein>
<reference key="1">
    <citation type="journal article" date="2001" name="J. Bacteriol.">
        <title>Complete nucleotide sequence and organization of the atrazine catabolic plasmid pADP-1 from Pseudomonas sp. strain ADP.</title>
        <authorList>
            <person name="Martinez B."/>
            <person name="Tomkins J."/>
            <person name="Wackett L.P."/>
            <person name="Wing R."/>
            <person name="Sadowsky M.J."/>
        </authorList>
    </citation>
    <scope>NUCLEOTIDE SEQUENCE [GENOMIC DNA]</scope>
    <scope>PATHWAY</scope>
    <scope>GENE NAME</scope>
    <source>
        <strain>ADP</strain>
    </source>
</reference>
<reference key="2">
    <citation type="journal article" date="2018" name="J. Biol. Chem.">
        <title>An unexpected vestigial protein complex reveals the evolutionary origins of an s-triazine catabolic enzyme.</title>
        <authorList>
            <person name="Esquirol L."/>
            <person name="Peat T.S."/>
            <person name="Wilding M."/>
            <person name="Liu J.W."/>
            <person name="French N.G."/>
            <person name="Hartley C.J."/>
            <person name="Onagi H."/>
            <person name="Nebl T."/>
            <person name="Easton C.J."/>
            <person name="Newman J."/>
            <person name="Scott C."/>
        </authorList>
    </citation>
    <scope>X-RAY CRYSTALLOGRAPHY (1.95 ANGSTROMS) IN COMPLEX WITH ATZG</scope>
    <scope>FUNCTION</scope>
    <scope>CATALYTIC ACTIVITY</scope>
    <scope>BIOPHYSICOCHEMICAL PROPERTIES</scope>
    <scope>SUBUNIT</scope>
    <scope>IDENTIFICATION BY MASS SPECTROMETRY</scope>
</reference>
<proteinExistence type="evidence at protein level"/>
<keyword id="KW-0002">3D-structure</keyword>
<keyword id="KW-0378">Hydrolase</keyword>
<keyword id="KW-0614">Plasmid</keyword>
<accession>Q936X3</accession>
<evidence type="ECO:0000250" key="1"/>
<evidence type="ECO:0000269" key="2">
    <source>
    </source>
</evidence>
<evidence type="ECO:0000269" key="3">
    <source>
    </source>
</evidence>
<evidence type="ECO:0000303" key="4">
    <source>
    </source>
</evidence>
<evidence type="ECO:0000303" key="5">
    <source>
    </source>
</evidence>
<evidence type="ECO:0000305" key="6"/>
<evidence type="ECO:0007829" key="7">
    <source>
        <dbReference type="PDB" id="6C62"/>
    </source>
</evidence>
<evidence type="ECO:0007829" key="8">
    <source>
        <dbReference type="PDB" id="6C6G"/>
    </source>
</evidence>
<comment type="function">
    <text evidence="3">Hydrolyzes 1-carboxybiuret to urea-1,3-dicarboxylate and NH(3).</text>
</comment>
<comment type="catalytic activity">
    <reaction evidence="3">
        <text>1-carboxybiuret + H2O = urea-1,3-dicarboxylate + NH4(+)</text>
        <dbReference type="Rhea" id="RHEA:58900"/>
        <dbReference type="ChEBI" id="CHEBI:15377"/>
        <dbReference type="ChEBI" id="CHEBI:28938"/>
        <dbReference type="ChEBI" id="CHEBI:142864"/>
        <dbReference type="ChEBI" id="CHEBI:142865"/>
        <dbReference type="EC" id="3.5.1.131"/>
    </reaction>
</comment>
<comment type="biophysicochemical properties">
    <kinetics>
        <KM evidence="3">63 uM for 1-carboxybiuret</KM>
        <KM evidence="3">785 uM for 1-nitrobiuret</KM>
        <KM evidence="3">167 uM for 1-carboxymalonamide</KM>
        <KM evidence="3">523 uM for succinamate</KM>
        <text evidence="3">kcat is 15.5 sec(-1) with 1-carboxybiuret as substrate. kcat is 9.4 sec(-1) with 1-nitrobiuret as substrate. kcat is 7 sec(-1) with 1-carboxymalonamide as substrate. kcat is 19 sec(-1) with succinamate as substrate.</text>
    </kinetics>
</comment>
<comment type="pathway">
    <text evidence="2">Xenobiotic degradation; atrazine degradation.</text>
</comment>
<comment type="subunit">
    <text evidence="3">Heterotetramer consisting of 2 AtzE and 2 AtzG subunits.</text>
</comment>
<comment type="similarity">
    <text evidence="6">Belongs to the amidase family.</text>
</comment>
<comment type="caution">
    <text evidence="2 3">Was originally thought to use biuret as substrate (PubMed:11544232). But new evidence has shown that 1-carboxybiuret is the real substrate. The error occurred since 1-carboxybiuret hydrolyzes spontaneously to biuret (PubMed:29523689).</text>
</comment>
<organism>
    <name type="scientific">Pseudomonas sp. (strain ADP)</name>
    <dbReference type="NCBI Taxonomy" id="47660"/>
    <lineage>
        <taxon>Bacteria</taxon>
        <taxon>Pseudomonadati</taxon>
        <taxon>Pseudomonadota</taxon>
        <taxon>Gammaproteobacteria</taxon>
        <taxon>Pseudomonadales</taxon>
        <taxon>Pseudomonadaceae</taxon>
        <taxon>Pseudomonas</taxon>
    </lineage>
</organism>
<gene>
    <name evidence="4" type="primary">atzE</name>
</gene>
<geneLocation type="plasmid">
    <name>pADP-1</name>
</geneLocation>
<name>ATZE_PSESD</name>
<sequence>MKTVEIIEGIASGRTSARDVCEEALATIGATDGLINAFTCRTVERARAEADAIDVRRARGEVLPPLAGLPYAVKNLFDIEGVTTLAGSKINRTLPPARADAVLVQRLKAAGAVLLGGLNMDEFAYGFTTENTHYGPTRNPHDTGRIAGGSSGGSGAAIAAGQVPLSLGSDTNGSIRVPASLCGVWGLKPTFGRLSRRGTYPFVHSIDHLGPLADSVEGLALAYDAMQGPDPLDPGCSASRIQPSVPVLSQGIAGLRIGVLGGWFRDNAGPAARAAVDVAALTLGASEVVMWPDAEIGRAAAFVITASEGGCLHLDDLRIRPQDFEPLSVDRFISGVLQPVAWYLRAQRFRRVYRDKVNALFRDWDILIAPATPISAPAIGTEWIEVNGTRHPCRPAMGLLTQPVSFAGCPVVAAPTWPGENDGMPIGVQLIAAPWNESLCLRAGKVLQDTGIARLKC</sequence>
<feature type="chain" id="PRO_0000418774" description="1-carboxybiuret hydrolase subunit AtzE">
    <location>
        <begin position="1"/>
        <end position="457"/>
    </location>
</feature>
<feature type="active site" description="Charge relay system" evidence="1">
    <location>
        <position position="74"/>
    </location>
</feature>
<feature type="active site" description="Charge relay system" evidence="1">
    <location>
        <position position="150"/>
    </location>
</feature>
<feature type="active site" description="Acyl-ester intermediate" evidence="1">
    <location>
        <position position="174"/>
    </location>
</feature>
<feature type="helix" evidence="7">
    <location>
        <begin position="3"/>
        <end position="11"/>
    </location>
</feature>
<feature type="helix" evidence="7">
    <location>
        <begin position="17"/>
        <end position="35"/>
    </location>
</feature>
<feature type="strand" evidence="7">
    <location>
        <begin position="38"/>
        <end position="41"/>
    </location>
</feature>
<feature type="helix" evidence="7">
    <location>
        <begin position="43"/>
        <end position="58"/>
    </location>
</feature>
<feature type="turn" evidence="7">
    <location>
        <begin position="65"/>
        <end position="68"/>
    </location>
</feature>
<feature type="strand" evidence="7">
    <location>
        <begin position="70"/>
        <end position="74"/>
    </location>
</feature>
<feature type="helix" evidence="7">
    <location>
        <begin position="90"/>
        <end position="93"/>
    </location>
</feature>
<feature type="helix" evidence="7">
    <location>
        <begin position="102"/>
        <end position="109"/>
    </location>
</feature>
<feature type="strand" evidence="7">
    <location>
        <begin position="113"/>
        <end position="118"/>
    </location>
</feature>
<feature type="helix" evidence="7">
    <location>
        <begin position="122"/>
        <end position="124"/>
    </location>
</feature>
<feature type="turn" evidence="7">
    <location>
        <begin position="132"/>
        <end position="134"/>
    </location>
</feature>
<feature type="strand" evidence="7">
    <location>
        <begin position="142"/>
        <end position="146"/>
    </location>
</feature>
<feature type="strand" evidence="7">
    <location>
        <begin position="149"/>
        <end position="151"/>
    </location>
</feature>
<feature type="helix" evidence="7">
    <location>
        <begin position="152"/>
        <end position="159"/>
    </location>
</feature>
<feature type="strand" evidence="7">
    <location>
        <begin position="164"/>
        <end position="173"/>
    </location>
</feature>
<feature type="helix" evidence="7">
    <location>
        <begin position="176"/>
        <end position="182"/>
    </location>
</feature>
<feature type="strand" evidence="7">
    <location>
        <begin position="185"/>
        <end position="188"/>
    </location>
</feature>
<feature type="turn" evidence="7">
    <location>
        <begin position="204"/>
        <end position="206"/>
    </location>
</feature>
<feature type="strand" evidence="7">
    <location>
        <begin position="208"/>
        <end position="215"/>
    </location>
</feature>
<feature type="helix" evidence="7">
    <location>
        <begin position="216"/>
        <end position="226"/>
    </location>
</feature>
<feature type="helix" evidence="7">
    <location>
        <begin position="245"/>
        <end position="247"/>
    </location>
</feature>
<feature type="strand" evidence="7">
    <location>
        <begin position="257"/>
        <end position="260"/>
    </location>
</feature>
<feature type="helix" evidence="7">
    <location>
        <begin position="263"/>
        <end position="266"/>
    </location>
</feature>
<feature type="helix" evidence="7">
    <location>
        <begin position="270"/>
        <end position="283"/>
    </location>
</feature>
<feature type="helix" evidence="7">
    <location>
        <begin position="294"/>
        <end position="312"/>
    </location>
</feature>
<feature type="helix" evidence="7">
    <location>
        <begin position="314"/>
        <end position="319"/>
    </location>
</feature>
<feature type="helix" evidence="7">
    <location>
        <begin position="321"/>
        <end position="323"/>
    </location>
</feature>
<feature type="turn" evidence="7">
    <location>
        <begin position="326"/>
        <end position="328"/>
    </location>
</feature>
<feature type="helix" evidence="7">
    <location>
        <begin position="329"/>
        <end position="336"/>
    </location>
</feature>
<feature type="helix" evidence="7">
    <location>
        <begin position="340"/>
        <end position="360"/>
    </location>
</feature>
<feature type="strand" evidence="7">
    <location>
        <begin position="365"/>
        <end position="375"/>
    </location>
</feature>
<feature type="strand" evidence="7">
    <location>
        <begin position="383"/>
        <end position="386"/>
    </location>
</feature>
<feature type="strand" evidence="7">
    <location>
        <begin position="389"/>
        <end position="392"/>
    </location>
</feature>
<feature type="helix" evidence="7">
    <location>
        <begin position="393"/>
        <end position="396"/>
    </location>
</feature>
<feature type="turn" evidence="7">
    <location>
        <begin position="397"/>
        <end position="401"/>
    </location>
</feature>
<feature type="helix" evidence="7">
    <location>
        <begin position="402"/>
        <end position="407"/>
    </location>
</feature>
<feature type="strand" evidence="7">
    <location>
        <begin position="411"/>
        <end position="416"/>
    </location>
</feature>
<feature type="strand" evidence="8">
    <location>
        <begin position="419"/>
        <end position="421"/>
    </location>
</feature>
<feature type="strand" evidence="7">
    <location>
        <begin position="426"/>
        <end position="432"/>
    </location>
</feature>
<feature type="helix" evidence="7">
    <location>
        <begin position="437"/>
        <end position="449"/>
    </location>
</feature>
<dbReference type="EC" id="3.5.1.131" evidence="3"/>
<dbReference type="EMBL" id="U66917">
    <property type="protein sequence ID" value="AAK50332.1"/>
    <property type="molecule type" value="Genomic_DNA"/>
</dbReference>
<dbReference type="RefSeq" id="NP_862538.1">
    <property type="nucleotide sequence ID" value="NC_004956.1"/>
</dbReference>
<dbReference type="RefSeq" id="WP_011117192.1">
    <property type="nucleotide sequence ID" value="NZ_CM003636.1"/>
</dbReference>
<dbReference type="PDB" id="6C62">
    <property type="method" value="X-ray"/>
    <property type="resolution" value="1.95 A"/>
    <property type="chains" value="A/B=1-457"/>
</dbReference>
<dbReference type="PDB" id="6C6G">
    <property type="method" value="X-ray"/>
    <property type="resolution" value="2.10 A"/>
    <property type="chains" value="A/B=1-457"/>
</dbReference>
<dbReference type="PDBsum" id="6C62"/>
<dbReference type="PDBsum" id="6C6G"/>
<dbReference type="SMR" id="Q936X3"/>
<dbReference type="KEGG" id="ag:AAK50332"/>
<dbReference type="BioCyc" id="MetaCyc:MONOMER-13538"/>
<dbReference type="BRENDA" id="3.5.1.131">
    <property type="organism ID" value="14885"/>
</dbReference>
<dbReference type="SABIO-RK" id="Q936X3"/>
<dbReference type="UniPathway" id="UPA00008"/>
<dbReference type="GO" id="GO:0018750">
    <property type="term" value="F:biuret amidohydrolase activity"/>
    <property type="evidence" value="ECO:0000314"/>
    <property type="project" value="UniProtKB"/>
</dbReference>
<dbReference type="GO" id="GO:0019381">
    <property type="term" value="P:atrazine catabolic process"/>
    <property type="evidence" value="ECO:0000314"/>
    <property type="project" value="UniProtKB"/>
</dbReference>
<dbReference type="Gene3D" id="3.90.1300.10">
    <property type="entry name" value="Amidase signature (AS) domain"/>
    <property type="match status" value="1"/>
</dbReference>
<dbReference type="InterPro" id="IPR000120">
    <property type="entry name" value="Amidase"/>
</dbReference>
<dbReference type="InterPro" id="IPR023631">
    <property type="entry name" value="Amidase_dom"/>
</dbReference>
<dbReference type="InterPro" id="IPR036928">
    <property type="entry name" value="AS_sf"/>
</dbReference>
<dbReference type="InterPro" id="IPR014087">
    <property type="entry name" value="Carboxybiuret_hydro_AtzE"/>
</dbReference>
<dbReference type="NCBIfam" id="TIGR02715">
    <property type="entry name" value="amido_AtzE"/>
    <property type="match status" value="1"/>
</dbReference>
<dbReference type="NCBIfam" id="NF006631">
    <property type="entry name" value="PRK09201.1"/>
    <property type="match status" value="1"/>
</dbReference>
<dbReference type="PANTHER" id="PTHR11895:SF172">
    <property type="entry name" value="GLUTAMYL-TRNA(GLN) AMIDOTRANSFERASE"/>
    <property type="match status" value="1"/>
</dbReference>
<dbReference type="PANTHER" id="PTHR11895">
    <property type="entry name" value="TRANSAMIDASE"/>
    <property type="match status" value="1"/>
</dbReference>
<dbReference type="Pfam" id="PF01425">
    <property type="entry name" value="Amidase"/>
    <property type="match status" value="1"/>
</dbReference>
<dbReference type="SUPFAM" id="SSF75304">
    <property type="entry name" value="Amidase signature (AS) enzymes"/>
    <property type="match status" value="1"/>
</dbReference>